<feature type="chain" id="PRO_1000016490" description="Protein NrdI">
    <location>
        <begin position="1"/>
        <end position="130"/>
    </location>
</feature>
<reference key="1">
    <citation type="journal article" date="2007" name="Nat. Biotechnol.">
        <title>Comparative analysis of the complete genome sequence of the plant growth-promoting bacterium Bacillus amyloliquefaciens FZB42.</title>
        <authorList>
            <person name="Chen X.H."/>
            <person name="Koumoutsi A."/>
            <person name="Scholz R."/>
            <person name="Eisenreich A."/>
            <person name="Schneider K."/>
            <person name="Heinemeyer I."/>
            <person name="Morgenstern B."/>
            <person name="Voss B."/>
            <person name="Hess W.R."/>
            <person name="Reva O."/>
            <person name="Junge H."/>
            <person name="Voigt B."/>
            <person name="Jungblut P.R."/>
            <person name="Vater J."/>
            <person name="Suessmuth R."/>
            <person name="Liesegang H."/>
            <person name="Strittmatter A."/>
            <person name="Gottschalk G."/>
            <person name="Borriss R."/>
        </authorList>
    </citation>
    <scope>NUCLEOTIDE SEQUENCE [LARGE SCALE GENOMIC DNA]</scope>
    <source>
        <strain>DSM 23117 / BGSC 10A6 / LMG 26770 / FZB42</strain>
    </source>
</reference>
<evidence type="ECO:0000255" key="1">
    <source>
        <dbReference type="HAMAP-Rule" id="MF_00128"/>
    </source>
</evidence>
<name>NRDI_BACVZ</name>
<accession>A7Z504</accession>
<organism>
    <name type="scientific">Bacillus velezensis (strain DSM 23117 / BGSC 10A6 / LMG 26770 / FZB42)</name>
    <name type="common">Bacillus amyloliquefaciens subsp. plantarum</name>
    <dbReference type="NCBI Taxonomy" id="326423"/>
    <lineage>
        <taxon>Bacteria</taxon>
        <taxon>Bacillati</taxon>
        <taxon>Bacillota</taxon>
        <taxon>Bacilli</taxon>
        <taxon>Bacillales</taxon>
        <taxon>Bacillaceae</taxon>
        <taxon>Bacillus</taxon>
        <taxon>Bacillus amyloliquefaciens group</taxon>
    </lineage>
</organism>
<dbReference type="EMBL" id="CP000560">
    <property type="protein sequence ID" value="ABS74080.1"/>
    <property type="molecule type" value="Genomic_DNA"/>
</dbReference>
<dbReference type="RefSeq" id="WP_003154061.1">
    <property type="nucleotide sequence ID" value="NC_009725.2"/>
</dbReference>
<dbReference type="SMR" id="A7Z504"/>
<dbReference type="GeneID" id="93080853"/>
<dbReference type="KEGG" id="bay:RBAM_017170"/>
<dbReference type="HOGENOM" id="CLU_114845_3_0_9"/>
<dbReference type="Proteomes" id="UP000001120">
    <property type="component" value="Chromosome"/>
</dbReference>
<dbReference type="GO" id="GO:0010181">
    <property type="term" value="F:FMN binding"/>
    <property type="evidence" value="ECO:0007669"/>
    <property type="project" value="InterPro"/>
</dbReference>
<dbReference type="GO" id="GO:0036211">
    <property type="term" value="P:protein modification process"/>
    <property type="evidence" value="ECO:0007669"/>
    <property type="project" value="InterPro"/>
</dbReference>
<dbReference type="FunFam" id="3.40.50.360:FF:000053">
    <property type="entry name" value="Protein NrdI"/>
    <property type="match status" value="1"/>
</dbReference>
<dbReference type="Gene3D" id="3.40.50.360">
    <property type="match status" value="1"/>
</dbReference>
<dbReference type="HAMAP" id="MF_00128">
    <property type="entry name" value="NrdI"/>
    <property type="match status" value="1"/>
</dbReference>
<dbReference type="InterPro" id="IPR029039">
    <property type="entry name" value="Flavoprotein-like_sf"/>
</dbReference>
<dbReference type="InterPro" id="IPR020852">
    <property type="entry name" value="RNR_Ib_NrdI_bac"/>
</dbReference>
<dbReference type="InterPro" id="IPR004465">
    <property type="entry name" value="RNR_NrdI"/>
</dbReference>
<dbReference type="NCBIfam" id="TIGR00333">
    <property type="entry name" value="nrdI"/>
    <property type="match status" value="1"/>
</dbReference>
<dbReference type="PANTHER" id="PTHR37297">
    <property type="entry name" value="PROTEIN NRDI"/>
    <property type="match status" value="1"/>
</dbReference>
<dbReference type="PANTHER" id="PTHR37297:SF1">
    <property type="entry name" value="PROTEIN NRDI"/>
    <property type="match status" value="1"/>
</dbReference>
<dbReference type="Pfam" id="PF07972">
    <property type="entry name" value="Flavodoxin_NdrI"/>
    <property type="match status" value="1"/>
</dbReference>
<dbReference type="PIRSF" id="PIRSF005087">
    <property type="entry name" value="NrdI"/>
    <property type="match status" value="1"/>
</dbReference>
<dbReference type="SUPFAM" id="SSF52218">
    <property type="entry name" value="Flavoproteins"/>
    <property type="match status" value="1"/>
</dbReference>
<comment type="function">
    <text evidence="1">Probably involved in ribonucleotide reductase function.</text>
</comment>
<comment type="similarity">
    <text evidence="1">Belongs to the NrdI family.</text>
</comment>
<proteinExistence type="inferred from homology"/>
<sequence>MVQIIFDSKTGNVQRFVNKTDFQLIRKVDETDHVDTPFVLVTYTTNFGQVPASTQSFLEKYAHLLLGVAASGNKVWGDNFAKSADTISRQYQVPILHKFELSGTSKDVELFTQEVERVVTKSSAKMDPVK</sequence>
<protein>
    <recommendedName>
        <fullName evidence="1">Protein NrdI</fullName>
    </recommendedName>
</protein>
<gene>
    <name evidence="1" type="primary">nrdI</name>
    <name type="ordered locus">RBAM_017170</name>
</gene>